<reference key="1">
    <citation type="journal article" date="2006" name="Nature">
        <title>Insights from the genome of the biotrophic fungal plant pathogen Ustilago maydis.</title>
        <authorList>
            <person name="Kaemper J."/>
            <person name="Kahmann R."/>
            <person name="Boelker M."/>
            <person name="Ma L.-J."/>
            <person name="Brefort T."/>
            <person name="Saville B.J."/>
            <person name="Banuett F."/>
            <person name="Kronstad J.W."/>
            <person name="Gold S.E."/>
            <person name="Mueller O."/>
            <person name="Perlin M.H."/>
            <person name="Woesten H.A.B."/>
            <person name="de Vries R."/>
            <person name="Ruiz-Herrera J."/>
            <person name="Reynaga-Pena C.G."/>
            <person name="Snetselaar K."/>
            <person name="McCann M."/>
            <person name="Perez-Martin J."/>
            <person name="Feldbruegge M."/>
            <person name="Basse C.W."/>
            <person name="Steinberg G."/>
            <person name="Ibeas J.I."/>
            <person name="Holloman W."/>
            <person name="Guzman P."/>
            <person name="Farman M.L."/>
            <person name="Stajich J.E."/>
            <person name="Sentandreu R."/>
            <person name="Gonzalez-Prieto J.M."/>
            <person name="Kennell J.C."/>
            <person name="Molina L."/>
            <person name="Schirawski J."/>
            <person name="Mendoza-Mendoza A."/>
            <person name="Greilinger D."/>
            <person name="Muench K."/>
            <person name="Roessel N."/>
            <person name="Scherer M."/>
            <person name="Vranes M."/>
            <person name="Ladendorf O."/>
            <person name="Vincon V."/>
            <person name="Fuchs U."/>
            <person name="Sandrock B."/>
            <person name="Meng S."/>
            <person name="Ho E.C.H."/>
            <person name="Cahill M.J."/>
            <person name="Boyce K.J."/>
            <person name="Klose J."/>
            <person name="Klosterman S.J."/>
            <person name="Deelstra H.J."/>
            <person name="Ortiz-Castellanos L."/>
            <person name="Li W."/>
            <person name="Sanchez-Alonso P."/>
            <person name="Schreier P.H."/>
            <person name="Haeuser-Hahn I."/>
            <person name="Vaupel M."/>
            <person name="Koopmann E."/>
            <person name="Friedrich G."/>
            <person name="Voss H."/>
            <person name="Schlueter T."/>
            <person name="Margolis J."/>
            <person name="Platt D."/>
            <person name="Swimmer C."/>
            <person name="Gnirke A."/>
            <person name="Chen F."/>
            <person name="Vysotskaia V."/>
            <person name="Mannhaupt G."/>
            <person name="Gueldener U."/>
            <person name="Muensterkoetter M."/>
            <person name="Haase D."/>
            <person name="Oesterheld M."/>
            <person name="Mewes H.-W."/>
            <person name="Mauceli E.W."/>
            <person name="DeCaprio D."/>
            <person name="Wade C.M."/>
            <person name="Butler J."/>
            <person name="Young S.K."/>
            <person name="Jaffe D.B."/>
            <person name="Calvo S.E."/>
            <person name="Nusbaum C."/>
            <person name="Galagan J.E."/>
            <person name="Birren B.W."/>
        </authorList>
    </citation>
    <scope>NUCLEOTIDE SEQUENCE [LARGE SCALE GENOMIC DNA]</scope>
    <source>
        <strain>DSM 14603 / FGSC 9021 / UM521</strain>
    </source>
</reference>
<reference key="2">
    <citation type="submission" date="2014-09" db="EMBL/GenBank/DDBJ databases">
        <authorList>
            <person name="Gueldener U."/>
            <person name="Muensterkoetter M."/>
            <person name="Walter M.C."/>
            <person name="Mannhaupt G."/>
            <person name="Kahmann R."/>
        </authorList>
    </citation>
    <scope>GENOME REANNOTATION</scope>
    <source>
        <strain>DSM 14603 / FGSC 9021 / UM521</strain>
    </source>
</reference>
<keyword id="KW-0539">Nucleus</keyword>
<keyword id="KW-1185">Reference proteome</keyword>
<keyword id="KW-0677">Repeat</keyword>
<keyword id="KW-0687">Ribonucleoprotein</keyword>
<keyword id="KW-0690">Ribosome biogenesis</keyword>
<keyword id="KW-0694">RNA-binding</keyword>
<keyword id="KW-0698">rRNA processing</keyword>
<evidence type="ECO:0000250" key="1">
    <source>
        <dbReference type="UniProtKB" id="P28007"/>
    </source>
</evidence>
<evidence type="ECO:0000256" key="2">
    <source>
        <dbReference type="SAM" id="MobiDB-lite"/>
    </source>
</evidence>
<evidence type="ECO:0000305" key="3"/>
<feature type="chain" id="PRO_0000327532" description="H/ACA ribonucleoprotein complex subunit GAR1">
    <location>
        <begin position="1"/>
        <end position="227"/>
    </location>
</feature>
<feature type="region of interest" description="Disordered" evidence="2">
    <location>
        <begin position="1"/>
        <end position="48"/>
    </location>
</feature>
<feature type="region of interest" description="RGG-box 1">
    <location>
        <begin position="4"/>
        <end position="35"/>
    </location>
</feature>
<feature type="region of interest" description="Disordered" evidence="2">
    <location>
        <begin position="136"/>
        <end position="227"/>
    </location>
</feature>
<feature type="region of interest" description="RGG-box 2">
    <location>
        <begin position="149"/>
        <end position="226"/>
    </location>
</feature>
<feature type="compositionally biased region" description="Gly residues" evidence="2">
    <location>
        <begin position="16"/>
        <end position="37"/>
    </location>
</feature>
<feature type="compositionally biased region" description="Gly residues" evidence="2">
    <location>
        <begin position="148"/>
        <end position="227"/>
    </location>
</feature>
<proteinExistence type="inferred from homology"/>
<comment type="function">
    <text evidence="1">Non-catalytic component of the H/ACA small nucleolar ribonucleoprotein (H/ACA snoRNP), which catalyzes pseudouridylation of rRNA and is required for ribosome biogenesis. This involves the isomerization of uridine such that the ribose is subsequently attached to C5, instead of the normal N1. Pseudouridine ('psi') residues may serve to stabilize the conformation of rRNAs. The H/ACA snoRNP complex also mediates pseudouridylation of other types of RNAs. The H/ACA snoRNP complex mediates pseudouridylation at position 93 in U2 snRNA.</text>
</comment>
<comment type="subunit">
    <text evidence="1">Component of the small nucleolar ribonucleoprotein particles containing H/ACA-type snoRNAs (H/ACA snoRNPs).</text>
</comment>
<comment type="subcellular location">
    <subcellularLocation>
        <location evidence="1">Nucleus</location>
        <location evidence="1">Nucleolus</location>
    </subcellularLocation>
</comment>
<comment type="similarity">
    <text evidence="3">Belongs to the GAR1 family.</text>
</comment>
<protein>
    <recommendedName>
        <fullName>H/ACA ribonucleoprotein complex subunit GAR1</fullName>
    </recommendedName>
    <alternativeName>
        <fullName>snoRNP protein GAR1</fullName>
    </alternativeName>
</protein>
<gene>
    <name type="primary">GAR1</name>
    <name type="ORF">UMAG_04573</name>
</gene>
<dbReference type="EMBL" id="CM003152">
    <property type="protein sequence ID" value="KIS67475.1"/>
    <property type="molecule type" value="Genomic_DNA"/>
</dbReference>
<dbReference type="RefSeq" id="XP_011390883.1">
    <property type="nucleotide sequence ID" value="XM_011392581.1"/>
</dbReference>
<dbReference type="SMR" id="Q4P5P0"/>
<dbReference type="FunCoup" id="Q4P5P0">
    <property type="interactions" value="330"/>
</dbReference>
<dbReference type="STRING" id="237631.Q4P5P0"/>
<dbReference type="EnsemblFungi" id="KIS67475">
    <property type="protein sequence ID" value="KIS67475"/>
    <property type="gene ID" value="UMAG_04573"/>
</dbReference>
<dbReference type="GeneID" id="23564715"/>
<dbReference type="KEGG" id="uma:UMAG_04573"/>
<dbReference type="VEuPathDB" id="FungiDB:UMAG_04573"/>
<dbReference type="eggNOG" id="KOG3262">
    <property type="taxonomic scope" value="Eukaryota"/>
</dbReference>
<dbReference type="HOGENOM" id="CLU_080002_1_0_1"/>
<dbReference type="InParanoid" id="Q4P5P0"/>
<dbReference type="OMA" id="YFTHPCE"/>
<dbReference type="OrthoDB" id="2187159at2759"/>
<dbReference type="Proteomes" id="UP000000561">
    <property type="component" value="Chromosome 13"/>
</dbReference>
<dbReference type="GO" id="GO:0031429">
    <property type="term" value="C:box H/ACA snoRNP complex"/>
    <property type="evidence" value="ECO:0000318"/>
    <property type="project" value="GO_Central"/>
</dbReference>
<dbReference type="GO" id="GO:0034513">
    <property type="term" value="F:box H/ACA snoRNA binding"/>
    <property type="evidence" value="ECO:0000318"/>
    <property type="project" value="GO_Central"/>
</dbReference>
<dbReference type="GO" id="GO:0000454">
    <property type="term" value="P:snoRNA guided rRNA pseudouridine synthesis"/>
    <property type="evidence" value="ECO:0000318"/>
    <property type="project" value="GO_Central"/>
</dbReference>
<dbReference type="GO" id="GO:0031120">
    <property type="term" value="P:snRNA pseudouridine synthesis"/>
    <property type="evidence" value="ECO:0007669"/>
    <property type="project" value="EnsemblFungi"/>
</dbReference>
<dbReference type="FunFam" id="2.40.10.230:FF:000001">
    <property type="entry name" value="H/ACA ribonucleoprotein complex subunit"/>
    <property type="match status" value="1"/>
</dbReference>
<dbReference type="Gene3D" id="2.40.10.230">
    <property type="entry name" value="Probable tRNA pseudouridine synthase domain"/>
    <property type="match status" value="1"/>
</dbReference>
<dbReference type="InterPro" id="IPR038664">
    <property type="entry name" value="Gar1/Naf1_Cbf5-bd_sf"/>
</dbReference>
<dbReference type="InterPro" id="IPR007504">
    <property type="entry name" value="H/ACA_rnp_Gar1/Naf1"/>
</dbReference>
<dbReference type="InterPro" id="IPR009000">
    <property type="entry name" value="Transl_B-barrel_sf"/>
</dbReference>
<dbReference type="PANTHER" id="PTHR23237:SF6">
    <property type="entry name" value="H_ACA RIBONUCLEOPROTEIN COMPLEX SUBUNIT 1"/>
    <property type="match status" value="1"/>
</dbReference>
<dbReference type="PANTHER" id="PTHR23237">
    <property type="entry name" value="NUCLEOLAR PROTEIN FAMILY A MEMBER 1 SNORNP PROTEIN GAR1"/>
    <property type="match status" value="1"/>
</dbReference>
<dbReference type="Pfam" id="PF04410">
    <property type="entry name" value="Gar1"/>
    <property type="match status" value="1"/>
</dbReference>
<dbReference type="SUPFAM" id="SSF50447">
    <property type="entry name" value="Translation proteins"/>
    <property type="match status" value="1"/>
</dbReference>
<organism>
    <name type="scientific">Mycosarcoma maydis</name>
    <name type="common">Corn smut fungus</name>
    <name type="synonym">Ustilago maydis</name>
    <dbReference type="NCBI Taxonomy" id="5270"/>
    <lineage>
        <taxon>Eukaryota</taxon>
        <taxon>Fungi</taxon>
        <taxon>Dikarya</taxon>
        <taxon>Basidiomycota</taxon>
        <taxon>Ustilaginomycotina</taxon>
        <taxon>Ustilaginomycetes</taxon>
        <taxon>Ustilaginales</taxon>
        <taxon>Ustilaginaceae</taxon>
        <taxon>Mycosarcoma</taxon>
    </lineage>
</organism>
<name>GAR1_MYCMD</name>
<sequence length="227" mass="22433">MSFRGGGRGGGDRGGRGGFSSRGGRGGFGGGGRGGYANAGPPETVQPMGSFMHAVEGEMLCQSTDAKHVPYFNAPIYLENKSQIGKVDEILGPINEVFFTVKMDPGMVATSFKADDKVYISGDKLLPIERFLPKPKSLTKAPKKKGGARGGAAGGRGGFGGGRGAPRGRGGFGGGRGGARGGGFGAPRGGGRGAFGGGRGGAFSGGRGGAAGARGGFGGRGRGRGGY</sequence>
<accession>Q4P5P0</accession>
<accession>A0A0D1DY66</accession>